<comment type="function">
    <text evidence="1">An L-glutamate ligase that catalyzes the ATP-dependent post-translational addition of glutamate residues to the C-terminus of ribosomal protein bS6 (RpsF). Is also able to catalyze the synthesis of poly-alpha-glutamate in vitro, via ATP hydrolysis from unprotected glutamate as substrate. The number of glutamate residues added to either RpsF or to poly-alpha-glutamate changes with pH.</text>
</comment>
<comment type="cofactor">
    <cofactor evidence="1">
        <name>Mg(2+)</name>
        <dbReference type="ChEBI" id="CHEBI:18420"/>
    </cofactor>
    <cofactor evidence="1">
        <name>Mn(2+)</name>
        <dbReference type="ChEBI" id="CHEBI:29035"/>
    </cofactor>
    <text evidence="1">Binds 2 magnesium or manganese ions per subunit.</text>
</comment>
<comment type="similarity">
    <text evidence="1">Belongs to the RimK family.</text>
</comment>
<name>RIMK_SALG2</name>
<feature type="chain" id="PRO_1000194373" description="Ribosomal protein bS6--L-glutamate ligase">
    <location>
        <begin position="1"/>
        <end position="300"/>
    </location>
</feature>
<feature type="domain" description="ATP-grasp" evidence="1">
    <location>
        <begin position="104"/>
        <end position="287"/>
    </location>
</feature>
<feature type="binding site" evidence="1">
    <location>
        <position position="141"/>
    </location>
    <ligand>
        <name>ATP</name>
        <dbReference type="ChEBI" id="CHEBI:30616"/>
    </ligand>
</feature>
<feature type="binding site" evidence="1">
    <location>
        <begin position="178"/>
        <end position="179"/>
    </location>
    <ligand>
        <name>ATP</name>
        <dbReference type="ChEBI" id="CHEBI:30616"/>
    </ligand>
</feature>
<feature type="binding site" evidence="1">
    <location>
        <position position="187"/>
    </location>
    <ligand>
        <name>ATP</name>
        <dbReference type="ChEBI" id="CHEBI:30616"/>
    </ligand>
</feature>
<feature type="binding site" evidence="1">
    <location>
        <begin position="211"/>
        <end position="213"/>
    </location>
    <ligand>
        <name>ATP</name>
        <dbReference type="ChEBI" id="CHEBI:30616"/>
    </ligand>
</feature>
<feature type="binding site" evidence="1">
    <location>
        <position position="248"/>
    </location>
    <ligand>
        <name>Mg(2+)</name>
        <dbReference type="ChEBI" id="CHEBI:18420"/>
        <label>1</label>
    </ligand>
</feature>
<feature type="binding site" evidence="1">
    <location>
        <position position="248"/>
    </location>
    <ligand>
        <name>Mn(2+)</name>
        <dbReference type="ChEBI" id="CHEBI:29035"/>
        <label>1</label>
    </ligand>
</feature>
<feature type="binding site" evidence="1">
    <location>
        <position position="260"/>
    </location>
    <ligand>
        <name>Mg(2+)</name>
        <dbReference type="ChEBI" id="CHEBI:18420"/>
        <label>1</label>
    </ligand>
</feature>
<feature type="binding site" evidence="1">
    <location>
        <position position="260"/>
    </location>
    <ligand>
        <name>Mg(2+)</name>
        <dbReference type="ChEBI" id="CHEBI:18420"/>
        <label>2</label>
    </ligand>
</feature>
<feature type="binding site" evidence="1">
    <location>
        <position position="260"/>
    </location>
    <ligand>
        <name>Mn(2+)</name>
        <dbReference type="ChEBI" id="CHEBI:29035"/>
        <label>1</label>
    </ligand>
</feature>
<feature type="binding site" evidence="1">
    <location>
        <position position="260"/>
    </location>
    <ligand>
        <name>Mn(2+)</name>
        <dbReference type="ChEBI" id="CHEBI:29035"/>
        <label>2</label>
    </ligand>
</feature>
<feature type="binding site" evidence="1">
    <location>
        <position position="262"/>
    </location>
    <ligand>
        <name>Mg(2+)</name>
        <dbReference type="ChEBI" id="CHEBI:18420"/>
        <label>2</label>
    </ligand>
</feature>
<feature type="binding site" evidence="1">
    <location>
        <position position="262"/>
    </location>
    <ligand>
        <name>Mn(2+)</name>
        <dbReference type="ChEBI" id="CHEBI:29035"/>
        <label>2</label>
    </ligand>
</feature>
<keyword id="KW-0067">ATP-binding</keyword>
<keyword id="KW-0436">Ligase</keyword>
<keyword id="KW-0460">Magnesium</keyword>
<keyword id="KW-0464">Manganese</keyword>
<keyword id="KW-0479">Metal-binding</keyword>
<keyword id="KW-0547">Nucleotide-binding</keyword>
<keyword id="KW-0648">Protein biosynthesis</keyword>
<organism>
    <name type="scientific">Salmonella gallinarum (strain 287/91 / NCTC 13346)</name>
    <dbReference type="NCBI Taxonomy" id="550538"/>
    <lineage>
        <taxon>Bacteria</taxon>
        <taxon>Pseudomonadati</taxon>
        <taxon>Pseudomonadota</taxon>
        <taxon>Gammaproteobacteria</taxon>
        <taxon>Enterobacterales</taxon>
        <taxon>Enterobacteriaceae</taxon>
        <taxon>Salmonella</taxon>
    </lineage>
</organism>
<accession>B5R861</accession>
<proteinExistence type="inferred from homology"/>
<gene>
    <name evidence="1" type="primary">rimK</name>
    <name type="ordered locus">SG0856</name>
</gene>
<evidence type="ECO:0000255" key="1">
    <source>
        <dbReference type="HAMAP-Rule" id="MF_01552"/>
    </source>
</evidence>
<sequence>MKIAILSRDGTLYSCKRLREAAMRRGHLVEILDPLSCYMNINPAASSIHYKGRRLPHFDAVIPRIGSAITFYGTAALRQFELLGSYPLNESVAITRARDKLRSLQLLARQGIDLPITGIAHSPDDTSDLIKMVGGAPLVVKLVEGTQGIGVVLAETRQAAESVIDAFRGLNAHILVQEYIAEAKGCDIRCLVVGNEVVAAIERCAKAGDFRSNLHRGGVASIATITPRERDIAIKAAQTLGLDVAGVDILRAARGPLVMEVNASPGLEGIEKTTGVDIAGRMIQWIERHATPEFCLKIGG</sequence>
<reference key="1">
    <citation type="journal article" date="2008" name="Genome Res.">
        <title>Comparative genome analysis of Salmonella enteritidis PT4 and Salmonella gallinarum 287/91 provides insights into evolutionary and host adaptation pathways.</title>
        <authorList>
            <person name="Thomson N.R."/>
            <person name="Clayton D.J."/>
            <person name="Windhorst D."/>
            <person name="Vernikos G."/>
            <person name="Davidson S."/>
            <person name="Churcher C."/>
            <person name="Quail M.A."/>
            <person name="Stevens M."/>
            <person name="Jones M.A."/>
            <person name="Watson M."/>
            <person name="Barron A."/>
            <person name="Layton A."/>
            <person name="Pickard D."/>
            <person name="Kingsley R.A."/>
            <person name="Bignell A."/>
            <person name="Clark L."/>
            <person name="Harris B."/>
            <person name="Ormond D."/>
            <person name="Abdellah Z."/>
            <person name="Brooks K."/>
            <person name="Cherevach I."/>
            <person name="Chillingworth T."/>
            <person name="Woodward J."/>
            <person name="Norberczak H."/>
            <person name="Lord A."/>
            <person name="Arrowsmith C."/>
            <person name="Jagels K."/>
            <person name="Moule S."/>
            <person name="Mungall K."/>
            <person name="Saunders M."/>
            <person name="Whitehead S."/>
            <person name="Chabalgoity J.A."/>
            <person name="Maskell D."/>
            <person name="Humphreys T."/>
            <person name="Roberts M."/>
            <person name="Barrow P.A."/>
            <person name="Dougan G."/>
            <person name="Parkhill J."/>
        </authorList>
    </citation>
    <scope>NUCLEOTIDE SEQUENCE [LARGE SCALE GENOMIC DNA]</scope>
    <source>
        <strain>287/91 / NCTC 13346</strain>
    </source>
</reference>
<dbReference type="EC" id="6.3.2.-" evidence="1"/>
<dbReference type="EMBL" id="AM933173">
    <property type="protein sequence ID" value="CAR36749.1"/>
    <property type="molecule type" value="Genomic_DNA"/>
</dbReference>
<dbReference type="RefSeq" id="WP_000684361.1">
    <property type="nucleotide sequence ID" value="NC_011274.1"/>
</dbReference>
<dbReference type="SMR" id="B5R861"/>
<dbReference type="KEGG" id="seg:SG0856"/>
<dbReference type="HOGENOM" id="CLU_054353_0_1_6"/>
<dbReference type="Proteomes" id="UP000008321">
    <property type="component" value="Chromosome"/>
</dbReference>
<dbReference type="GO" id="GO:0005737">
    <property type="term" value="C:cytoplasm"/>
    <property type="evidence" value="ECO:0007669"/>
    <property type="project" value="TreeGrafter"/>
</dbReference>
<dbReference type="GO" id="GO:0005524">
    <property type="term" value="F:ATP binding"/>
    <property type="evidence" value="ECO:0007669"/>
    <property type="project" value="UniProtKB-UniRule"/>
</dbReference>
<dbReference type="GO" id="GO:0046872">
    <property type="term" value="F:metal ion binding"/>
    <property type="evidence" value="ECO:0007669"/>
    <property type="project" value="UniProtKB-KW"/>
</dbReference>
<dbReference type="GO" id="GO:0018169">
    <property type="term" value="F:ribosomal S6-glutamic acid ligase activity"/>
    <property type="evidence" value="ECO:0007669"/>
    <property type="project" value="UniProtKB-UniRule"/>
</dbReference>
<dbReference type="GO" id="GO:0036211">
    <property type="term" value="P:protein modification process"/>
    <property type="evidence" value="ECO:0007669"/>
    <property type="project" value="InterPro"/>
</dbReference>
<dbReference type="GO" id="GO:0009432">
    <property type="term" value="P:SOS response"/>
    <property type="evidence" value="ECO:0007669"/>
    <property type="project" value="TreeGrafter"/>
</dbReference>
<dbReference type="GO" id="GO:0006412">
    <property type="term" value="P:translation"/>
    <property type="evidence" value="ECO:0007669"/>
    <property type="project" value="UniProtKB-KW"/>
</dbReference>
<dbReference type="FunFam" id="3.40.50.20:FF:000004">
    <property type="entry name" value="Probable alpha-L-glutamate ligase"/>
    <property type="match status" value="1"/>
</dbReference>
<dbReference type="FunFam" id="3.30.1490.20:FF:000005">
    <property type="entry name" value="Probable alpha-L-glutamate ligase 1"/>
    <property type="match status" value="1"/>
</dbReference>
<dbReference type="FunFam" id="3.30.470.20:FF:000016">
    <property type="entry name" value="Ribosomal protein S6--L-glutamate ligase"/>
    <property type="match status" value="1"/>
</dbReference>
<dbReference type="Gene3D" id="3.40.50.20">
    <property type="match status" value="1"/>
</dbReference>
<dbReference type="Gene3D" id="3.30.1490.20">
    <property type="entry name" value="ATP-grasp fold, A domain"/>
    <property type="match status" value="1"/>
</dbReference>
<dbReference type="Gene3D" id="3.30.470.20">
    <property type="entry name" value="ATP-grasp fold, B domain"/>
    <property type="match status" value="1"/>
</dbReference>
<dbReference type="HAMAP" id="MF_01552">
    <property type="entry name" value="RimK"/>
    <property type="match status" value="1"/>
</dbReference>
<dbReference type="InterPro" id="IPR011761">
    <property type="entry name" value="ATP-grasp"/>
</dbReference>
<dbReference type="InterPro" id="IPR013651">
    <property type="entry name" value="ATP-grasp_RimK-type"/>
</dbReference>
<dbReference type="InterPro" id="IPR013815">
    <property type="entry name" value="ATP_grasp_subdomain_1"/>
</dbReference>
<dbReference type="InterPro" id="IPR023533">
    <property type="entry name" value="RimK"/>
</dbReference>
<dbReference type="InterPro" id="IPR041107">
    <property type="entry name" value="Rimk_N"/>
</dbReference>
<dbReference type="InterPro" id="IPR004666">
    <property type="entry name" value="Rp_bS6_RimK/Lys_biosynth_LsyX"/>
</dbReference>
<dbReference type="NCBIfam" id="NF007764">
    <property type="entry name" value="PRK10446.1"/>
    <property type="match status" value="1"/>
</dbReference>
<dbReference type="NCBIfam" id="TIGR00768">
    <property type="entry name" value="rimK_fam"/>
    <property type="match status" value="1"/>
</dbReference>
<dbReference type="PANTHER" id="PTHR21621:SF7">
    <property type="entry name" value="RIBOSOMAL PROTEIN BS6--L-GLUTAMATE LIGASE"/>
    <property type="match status" value="1"/>
</dbReference>
<dbReference type="PANTHER" id="PTHR21621">
    <property type="entry name" value="RIBOSOMAL PROTEIN S6 MODIFICATION PROTEIN"/>
    <property type="match status" value="1"/>
</dbReference>
<dbReference type="Pfam" id="PF08443">
    <property type="entry name" value="RimK"/>
    <property type="match status" value="1"/>
</dbReference>
<dbReference type="Pfam" id="PF18030">
    <property type="entry name" value="Rimk_N"/>
    <property type="match status" value="1"/>
</dbReference>
<dbReference type="SUPFAM" id="SSF56059">
    <property type="entry name" value="Glutathione synthetase ATP-binding domain-like"/>
    <property type="match status" value="1"/>
</dbReference>
<dbReference type="PROSITE" id="PS50975">
    <property type="entry name" value="ATP_GRASP"/>
    <property type="match status" value="1"/>
</dbReference>
<protein>
    <recommendedName>
        <fullName evidence="1">Ribosomal protein bS6--L-glutamate ligase</fullName>
        <ecNumber evidence="1">6.3.2.-</ecNumber>
    </recommendedName>
    <alternativeName>
        <fullName evidence="1">Poly-alpha-glutamate synthase</fullName>
    </alternativeName>
    <alternativeName>
        <fullName evidence="1">Ribosomal protein bS6 modification protein</fullName>
    </alternativeName>
</protein>